<organism>
    <name type="scientific">Staphylococcus saprophyticus subsp. saprophyticus (strain ATCC 15305 / DSM 20229 / NCIMB 8711 / NCTC 7292 / S-41)</name>
    <dbReference type="NCBI Taxonomy" id="342451"/>
    <lineage>
        <taxon>Bacteria</taxon>
        <taxon>Bacillati</taxon>
        <taxon>Bacillota</taxon>
        <taxon>Bacilli</taxon>
        <taxon>Bacillales</taxon>
        <taxon>Staphylococcaceae</taxon>
        <taxon>Staphylococcus</taxon>
    </lineage>
</organism>
<comment type="function">
    <text evidence="1">Endoribonuclease that initiates mRNA decay.</text>
</comment>
<comment type="subcellular location">
    <subcellularLocation>
        <location evidence="1">Cell membrane</location>
        <topology evidence="1">Single-pass membrane protein</topology>
    </subcellularLocation>
</comment>
<comment type="similarity">
    <text evidence="1">Belongs to the RNase Y family.</text>
</comment>
<dbReference type="EC" id="3.1.-.-" evidence="1"/>
<dbReference type="EMBL" id="AP008934">
    <property type="protein sequence ID" value="BAE18624.1"/>
    <property type="molecule type" value="Genomic_DNA"/>
</dbReference>
<dbReference type="RefSeq" id="WP_011303241.1">
    <property type="nucleotide sequence ID" value="NZ_MTGA01000034.1"/>
</dbReference>
<dbReference type="SMR" id="Q49X74"/>
<dbReference type="GeneID" id="3617221"/>
<dbReference type="KEGG" id="ssp:SSP1479"/>
<dbReference type="PATRIC" id="fig|342451.11.peg.1482"/>
<dbReference type="eggNOG" id="COG1418">
    <property type="taxonomic scope" value="Bacteria"/>
</dbReference>
<dbReference type="HOGENOM" id="CLU_028328_1_0_9"/>
<dbReference type="OrthoDB" id="9803205at2"/>
<dbReference type="Proteomes" id="UP000006371">
    <property type="component" value="Chromosome"/>
</dbReference>
<dbReference type="GO" id="GO:0005886">
    <property type="term" value="C:plasma membrane"/>
    <property type="evidence" value="ECO:0007669"/>
    <property type="project" value="UniProtKB-SubCell"/>
</dbReference>
<dbReference type="GO" id="GO:0003723">
    <property type="term" value="F:RNA binding"/>
    <property type="evidence" value="ECO:0007669"/>
    <property type="project" value="UniProtKB-UniRule"/>
</dbReference>
<dbReference type="GO" id="GO:0004521">
    <property type="term" value="F:RNA endonuclease activity"/>
    <property type="evidence" value="ECO:0007669"/>
    <property type="project" value="UniProtKB-UniRule"/>
</dbReference>
<dbReference type="GO" id="GO:0006402">
    <property type="term" value="P:mRNA catabolic process"/>
    <property type="evidence" value="ECO:0007669"/>
    <property type="project" value="UniProtKB-UniRule"/>
</dbReference>
<dbReference type="CDD" id="cd00077">
    <property type="entry name" value="HDc"/>
    <property type="match status" value="1"/>
</dbReference>
<dbReference type="CDD" id="cd22431">
    <property type="entry name" value="KH-I_RNaseY"/>
    <property type="match status" value="1"/>
</dbReference>
<dbReference type="FunFam" id="1.10.3210.10:FF:000003">
    <property type="entry name" value="Ribonuclease Y"/>
    <property type="match status" value="1"/>
</dbReference>
<dbReference type="FunFam" id="3.30.1370.10:FF:000006">
    <property type="entry name" value="Ribonuclease Y"/>
    <property type="match status" value="1"/>
</dbReference>
<dbReference type="Gene3D" id="1.10.3210.10">
    <property type="entry name" value="Hypothetical protein af1432"/>
    <property type="match status" value="1"/>
</dbReference>
<dbReference type="Gene3D" id="3.30.1370.10">
    <property type="entry name" value="K Homology domain, type 1"/>
    <property type="match status" value="1"/>
</dbReference>
<dbReference type="HAMAP" id="MF_00335">
    <property type="entry name" value="RNase_Y"/>
    <property type="match status" value="1"/>
</dbReference>
<dbReference type="InterPro" id="IPR003607">
    <property type="entry name" value="HD/PDEase_dom"/>
</dbReference>
<dbReference type="InterPro" id="IPR006674">
    <property type="entry name" value="HD_domain"/>
</dbReference>
<dbReference type="InterPro" id="IPR006675">
    <property type="entry name" value="HDIG_dom"/>
</dbReference>
<dbReference type="InterPro" id="IPR004087">
    <property type="entry name" value="KH_dom"/>
</dbReference>
<dbReference type="InterPro" id="IPR004088">
    <property type="entry name" value="KH_dom_type_1"/>
</dbReference>
<dbReference type="InterPro" id="IPR036612">
    <property type="entry name" value="KH_dom_type_1_sf"/>
</dbReference>
<dbReference type="InterPro" id="IPR017705">
    <property type="entry name" value="Ribonuclease_Y"/>
</dbReference>
<dbReference type="InterPro" id="IPR022711">
    <property type="entry name" value="RNase_Y_N"/>
</dbReference>
<dbReference type="NCBIfam" id="TIGR00277">
    <property type="entry name" value="HDIG"/>
    <property type="match status" value="1"/>
</dbReference>
<dbReference type="NCBIfam" id="TIGR03319">
    <property type="entry name" value="RNase_Y"/>
    <property type="match status" value="1"/>
</dbReference>
<dbReference type="PANTHER" id="PTHR12826">
    <property type="entry name" value="RIBONUCLEASE Y"/>
    <property type="match status" value="1"/>
</dbReference>
<dbReference type="PANTHER" id="PTHR12826:SF15">
    <property type="entry name" value="RIBONUCLEASE Y"/>
    <property type="match status" value="1"/>
</dbReference>
<dbReference type="Pfam" id="PF01966">
    <property type="entry name" value="HD"/>
    <property type="match status" value="1"/>
</dbReference>
<dbReference type="Pfam" id="PF00013">
    <property type="entry name" value="KH_1"/>
    <property type="match status" value="1"/>
</dbReference>
<dbReference type="Pfam" id="PF12072">
    <property type="entry name" value="RNase_Y_N"/>
    <property type="match status" value="1"/>
</dbReference>
<dbReference type="SMART" id="SM00471">
    <property type="entry name" value="HDc"/>
    <property type="match status" value="1"/>
</dbReference>
<dbReference type="SMART" id="SM00322">
    <property type="entry name" value="KH"/>
    <property type="match status" value="1"/>
</dbReference>
<dbReference type="SUPFAM" id="SSF54791">
    <property type="entry name" value="Eukaryotic type KH-domain (KH-domain type I)"/>
    <property type="match status" value="1"/>
</dbReference>
<dbReference type="SUPFAM" id="SSF109604">
    <property type="entry name" value="HD-domain/PDEase-like"/>
    <property type="match status" value="1"/>
</dbReference>
<dbReference type="PROSITE" id="PS51831">
    <property type="entry name" value="HD"/>
    <property type="match status" value="1"/>
</dbReference>
<dbReference type="PROSITE" id="PS50084">
    <property type="entry name" value="KH_TYPE_1"/>
    <property type="match status" value="1"/>
</dbReference>
<reference key="1">
    <citation type="journal article" date="2005" name="Proc. Natl. Acad. Sci. U.S.A.">
        <title>Whole genome sequence of Staphylococcus saprophyticus reveals the pathogenesis of uncomplicated urinary tract infection.</title>
        <authorList>
            <person name="Kuroda M."/>
            <person name="Yamashita A."/>
            <person name="Hirakawa H."/>
            <person name="Kumano M."/>
            <person name="Morikawa K."/>
            <person name="Higashide M."/>
            <person name="Maruyama A."/>
            <person name="Inose Y."/>
            <person name="Matoba K."/>
            <person name="Toh H."/>
            <person name="Kuhara S."/>
            <person name="Hattori M."/>
            <person name="Ohta T."/>
        </authorList>
    </citation>
    <scope>NUCLEOTIDE SEQUENCE [LARGE SCALE GENOMIC DNA]</scope>
    <source>
        <strain>ATCC 15305 / DSM 20229 / NCIMB 8711 / NCTC 7292 / S-41</strain>
    </source>
</reference>
<sequence length="519" mass="58305">MNLLGLLLILLGIILGVVVGYIVARNLLHQKQLQAGQTAEDIIEQGNKEAENIKKEKLLEAKEENQIIKEQSEIELRERRGDLQKQEARLLQKEENLERKSDLLDKKDEILEQKESKLEERQQQVDAKESSVQTLINKHEQELERISGLTQAEAAQEQLQRVEDELSQDIAILVKEKEREAKEAVDKNAKELLATTVQRLAAEHTSESTVSVVNLPNDEMKGRIIGREGRNIRTLETLTGIDLIIDDTPEAVILSGFDPIRREIARTALVNLVSDGRIHPGRIEDMVDKARKEVDDIIRDAGEQATFEINVHNMHPDLVKILGRLQYRTSYGQNVLKHSIEVAHLSGMLAAELGEDITLAKRAGLLHDVGKAIDHEVEGSHVEIGVELAKKYAENETVINAIHSHHGDVEPTSIISILVAAADALSAARPGARKETLENYIRRLERLETLSESYEGVEKAFAIQAGREIRVIVSPDTIDDLKSHRLARDIKSQIEDELQYPGHIKVTVVRETRAIEYAK</sequence>
<proteinExistence type="inferred from homology"/>
<feature type="chain" id="PRO_0000344938" description="Ribonuclease Y">
    <location>
        <begin position="1"/>
        <end position="519"/>
    </location>
</feature>
<feature type="transmembrane region" description="Helical" evidence="1">
    <location>
        <begin position="3"/>
        <end position="23"/>
    </location>
</feature>
<feature type="domain" description="KH" evidence="1">
    <location>
        <begin position="209"/>
        <end position="269"/>
    </location>
</feature>
<feature type="domain" description="HD" evidence="2">
    <location>
        <begin position="335"/>
        <end position="428"/>
    </location>
</feature>
<name>RNY_STAS1</name>
<gene>
    <name evidence="1" type="primary">rny</name>
    <name type="ordered locus">SSP1479</name>
</gene>
<keyword id="KW-1003">Cell membrane</keyword>
<keyword id="KW-0255">Endonuclease</keyword>
<keyword id="KW-0378">Hydrolase</keyword>
<keyword id="KW-0472">Membrane</keyword>
<keyword id="KW-0540">Nuclease</keyword>
<keyword id="KW-1185">Reference proteome</keyword>
<keyword id="KW-0694">RNA-binding</keyword>
<keyword id="KW-0812">Transmembrane</keyword>
<keyword id="KW-1133">Transmembrane helix</keyword>
<evidence type="ECO:0000255" key="1">
    <source>
        <dbReference type="HAMAP-Rule" id="MF_00335"/>
    </source>
</evidence>
<evidence type="ECO:0000255" key="2">
    <source>
        <dbReference type="PROSITE-ProRule" id="PRU01175"/>
    </source>
</evidence>
<accession>Q49X74</accession>
<protein>
    <recommendedName>
        <fullName evidence="1">Ribonuclease Y</fullName>
        <shortName evidence="1">RNase Y</shortName>
        <ecNumber evidence="1">3.1.-.-</ecNumber>
    </recommendedName>
</protein>